<name>TPC_BOVIN</name>
<comment type="function">
    <text evidence="2">Mitochondrial transporter mediating uptake of thiamine diphosphate into mitochondria. It is not clear if the antiporter activity is affected by the membrane potential or by the proton electrochemical gradient.</text>
</comment>
<comment type="catalytic activity">
    <reaction evidence="2">
        <text>thiamine phosphate(out) + thiamine diphosphate(in) = thiamine phosphate(in) + thiamine diphosphate(out)</text>
        <dbReference type="Rhea" id="RHEA:73383"/>
        <dbReference type="ChEBI" id="CHEBI:37575"/>
        <dbReference type="ChEBI" id="CHEBI:58937"/>
    </reaction>
</comment>
<comment type="subcellular location">
    <subcellularLocation>
        <location evidence="2">Mitochondrion membrane</location>
        <topology evidence="3">Multi-pass membrane protein</topology>
    </subcellularLocation>
</comment>
<comment type="similarity">
    <text evidence="5">Belongs to the mitochondrial carrier (TC 2.A.29) family.</text>
</comment>
<comment type="caution">
    <text evidence="2">Previously identified as the mitochondrial deoxyribonucleotide carrier. However other experiments later demonstrated that SLC25A19 is a thiamine diphosphate transporter and not a mitochondrial deoxyribonucleotide carrier.</text>
</comment>
<proteinExistence type="evidence at transcript level"/>
<reference key="1">
    <citation type="submission" date="2006-02" db="EMBL/GenBank/DDBJ databases">
        <authorList>
            <consortium name="NIH - Mammalian Gene Collection (MGC) project"/>
        </authorList>
    </citation>
    <scope>NUCLEOTIDE SEQUENCE [LARGE SCALE MRNA]</scope>
    <source>
        <strain>Hereford</strain>
        <tissue>Heart ventricle</tissue>
    </source>
</reference>
<evidence type="ECO:0000250" key="1"/>
<evidence type="ECO:0000250" key="2">
    <source>
        <dbReference type="UniProtKB" id="Q9HC21"/>
    </source>
</evidence>
<evidence type="ECO:0000255" key="3"/>
<evidence type="ECO:0000255" key="4">
    <source>
        <dbReference type="PROSITE-ProRule" id="PRU00282"/>
    </source>
</evidence>
<evidence type="ECO:0000305" key="5"/>
<protein>
    <recommendedName>
        <fullName>Mitochondrial thiamine pyrophosphate carrier</fullName>
    </recommendedName>
    <alternativeName>
        <fullName>Solute carrier family 25 member 19</fullName>
    </alternativeName>
</protein>
<keyword id="KW-0050">Antiport</keyword>
<keyword id="KW-0472">Membrane</keyword>
<keyword id="KW-0496">Mitochondrion</keyword>
<keyword id="KW-0597">Phosphoprotein</keyword>
<keyword id="KW-1185">Reference proteome</keyword>
<keyword id="KW-0677">Repeat</keyword>
<keyword id="KW-0812">Transmembrane</keyword>
<keyword id="KW-1133">Transmembrane helix</keyword>
<keyword id="KW-0813">Transport</keyword>
<gene>
    <name type="primary">SLC25A19</name>
    <name type="synonym">DNC</name>
</gene>
<dbReference type="EMBL" id="BC114115">
    <property type="protein sequence ID" value="AAI14116.1"/>
    <property type="molecule type" value="mRNA"/>
</dbReference>
<dbReference type="RefSeq" id="NP_001039352.1">
    <property type="nucleotide sequence ID" value="NM_001045887.1"/>
</dbReference>
<dbReference type="RefSeq" id="XP_005221206.1">
    <property type="nucleotide sequence ID" value="XM_005221149.5"/>
</dbReference>
<dbReference type="RefSeq" id="XP_010814811.1">
    <property type="nucleotide sequence ID" value="XM_010816509.2"/>
</dbReference>
<dbReference type="RefSeq" id="XP_015314442.1">
    <property type="nucleotide sequence ID" value="XM_015458956.1"/>
</dbReference>
<dbReference type="RefSeq" id="XP_015314443.1">
    <property type="nucleotide sequence ID" value="XM_015458957.1"/>
</dbReference>
<dbReference type="RefSeq" id="XP_024835489.1">
    <property type="nucleotide sequence ID" value="XM_024979721.2"/>
</dbReference>
<dbReference type="RefSeq" id="XP_024835490.1">
    <property type="nucleotide sequence ID" value="XM_024979722.2"/>
</dbReference>
<dbReference type="SMR" id="Q29RM1"/>
<dbReference type="FunCoup" id="Q29RM1">
    <property type="interactions" value="1387"/>
</dbReference>
<dbReference type="STRING" id="9913.ENSBTAP00000000237"/>
<dbReference type="PaxDb" id="9913-ENSBTAP00000000237"/>
<dbReference type="Ensembl" id="ENSBTAT00000000237.5">
    <property type="protein sequence ID" value="ENSBTAP00000000237.3"/>
    <property type="gene ID" value="ENSBTAG00000000202.5"/>
</dbReference>
<dbReference type="GeneID" id="504418"/>
<dbReference type="KEGG" id="bta:504418"/>
<dbReference type="CTD" id="60386"/>
<dbReference type="VEuPathDB" id="HostDB:ENSBTAG00000000202"/>
<dbReference type="VGNC" id="VGNC:34747">
    <property type="gene designation" value="SLC25A19"/>
</dbReference>
<dbReference type="eggNOG" id="KOG0752">
    <property type="taxonomic scope" value="Eukaryota"/>
</dbReference>
<dbReference type="GeneTree" id="ENSGT00550000074902"/>
<dbReference type="HOGENOM" id="CLU_015166_10_3_1"/>
<dbReference type="InParanoid" id="Q29RM1"/>
<dbReference type="OMA" id="MYVCYGA"/>
<dbReference type="OrthoDB" id="18574at2759"/>
<dbReference type="TreeFam" id="TF313047"/>
<dbReference type="Reactome" id="R-BTA-196819">
    <property type="pathway name" value="Vitamin B1 (thiamin) metabolism"/>
</dbReference>
<dbReference type="Proteomes" id="UP000009136">
    <property type="component" value="Chromosome 19"/>
</dbReference>
<dbReference type="Bgee" id="ENSBTAG00000000202">
    <property type="expression patterns" value="Expressed in monocyte and 105 other cell types or tissues"/>
</dbReference>
<dbReference type="GO" id="GO:0005743">
    <property type="term" value="C:mitochondrial inner membrane"/>
    <property type="evidence" value="ECO:0000318"/>
    <property type="project" value="GO_Central"/>
</dbReference>
<dbReference type="GO" id="GO:0005739">
    <property type="term" value="C:mitochondrion"/>
    <property type="evidence" value="ECO:0000250"/>
    <property type="project" value="UniProtKB"/>
</dbReference>
<dbReference type="GO" id="GO:0015297">
    <property type="term" value="F:antiporter activity"/>
    <property type="evidence" value="ECO:0007669"/>
    <property type="project" value="UniProtKB-KW"/>
</dbReference>
<dbReference type="GO" id="GO:0090422">
    <property type="term" value="F:thiamine pyrophosphate transmembrane transporter activity"/>
    <property type="evidence" value="ECO:0000250"/>
    <property type="project" value="UniProtKB"/>
</dbReference>
<dbReference type="GO" id="GO:0015234">
    <property type="term" value="F:thiamine transmembrane transporter activity"/>
    <property type="evidence" value="ECO:0000318"/>
    <property type="project" value="GO_Central"/>
</dbReference>
<dbReference type="GO" id="GO:0009229">
    <property type="term" value="P:thiamine diphosphate biosynthetic process"/>
    <property type="evidence" value="ECO:0007669"/>
    <property type="project" value="Ensembl"/>
</dbReference>
<dbReference type="GO" id="GO:0030974">
    <property type="term" value="P:thiamine pyrophosphate transmembrane transport"/>
    <property type="evidence" value="ECO:0000250"/>
    <property type="project" value="UniProtKB"/>
</dbReference>
<dbReference type="FunFam" id="1.50.40.10:FF:000011">
    <property type="entry name" value="Mitochondrial thiamine pyrophosphate carrier 1"/>
    <property type="match status" value="1"/>
</dbReference>
<dbReference type="Gene3D" id="1.50.40.10">
    <property type="entry name" value="Mitochondrial carrier domain"/>
    <property type="match status" value="1"/>
</dbReference>
<dbReference type="InterPro" id="IPR002067">
    <property type="entry name" value="Mit_carrier"/>
</dbReference>
<dbReference type="InterPro" id="IPR018108">
    <property type="entry name" value="Mitochondrial_sb/sol_carrier"/>
</dbReference>
<dbReference type="InterPro" id="IPR023395">
    <property type="entry name" value="Mt_carrier_dom_sf"/>
</dbReference>
<dbReference type="PANTHER" id="PTHR24089">
    <property type="entry name" value="SOLUTE CARRIER FAMILY 25"/>
    <property type="match status" value="1"/>
</dbReference>
<dbReference type="Pfam" id="PF00153">
    <property type="entry name" value="Mito_carr"/>
    <property type="match status" value="3"/>
</dbReference>
<dbReference type="PRINTS" id="PR00926">
    <property type="entry name" value="MITOCARRIER"/>
</dbReference>
<dbReference type="SUPFAM" id="SSF103506">
    <property type="entry name" value="Mitochondrial carrier"/>
    <property type="match status" value="1"/>
</dbReference>
<dbReference type="PROSITE" id="PS50920">
    <property type="entry name" value="SOLCAR"/>
    <property type="match status" value="3"/>
</dbReference>
<feature type="chain" id="PRO_0000263627" description="Mitochondrial thiamine pyrophosphate carrier">
    <location>
        <begin position="1"/>
        <end position="318"/>
    </location>
</feature>
<feature type="transmembrane region" description="Helical; Name=1" evidence="3">
    <location>
        <begin position="19"/>
        <end position="39"/>
    </location>
</feature>
<feature type="transmembrane region" description="Helical; Name=2" evidence="3">
    <location>
        <begin position="87"/>
        <end position="107"/>
    </location>
</feature>
<feature type="transmembrane region" description="Helical; Name=3" evidence="3">
    <location>
        <begin position="122"/>
        <end position="142"/>
    </location>
</feature>
<feature type="transmembrane region" description="Helical; Name=4" evidence="3">
    <location>
        <begin position="173"/>
        <end position="193"/>
    </location>
</feature>
<feature type="transmembrane region" description="Helical; Name=5" evidence="3">
    <location>
        <begin position="220"/>
        <end position="240"/>
    </location>
</feature>
<feature type="transmembrane region" description="Helical; Name=6" evidence="3">
    <location>
        <begin position="293"/>
        <end position="313"/>
    </location>
</feature>
<feature type="repeat" description="Solcar 1" evidence="4">
    <location>
        <begin position="13"/>
        <end position="106"/>
    </location>
</feature>
<feature type="repeat" description="Solcar 2" evidence="4">
    <location>
        <begin position="116"/>
        <end position="202"/>
    </location>
</feature>
<feature type="repeat" description="Solcar 3" evidence="4">
    <location>
        <begin position="214"/>
        <end position="309"/>
    </location>
</feature>
<feature type="short sequence motif" description="Substrate recognition" evidence="1">
    <location>
        <begin position="241"/>
        <end position="246"/>
    </location>
</feature>
<feature type="modified residue" description="Phosphoserine" evidence="2">
    <location>
        <position position="51"/>
    </location>
</feature>
<sequence>MVGYDPKADDRDISNVEVAVAGSVSGLVTRVLISPLDVIKIRFQLQIERLSRSDPNAKYHGILQAGRQILQEEGPTAFWKGHIPAQLLSIGYGAVQFLSFEALTELVHRASVRDARDFSVHFLCGGLSACVATLAVHPVDVLRTRFAAQGEPRVYKTLRDAVVTMYRTEGPLVFYKGLNPTLIAIFPYAGFQFSIYSSLKRAYEWALPAEGKKNGNFKNLLCGSGAGVISKTLTYPLDLFKKRLQVGGFEQARASFGQVRSYKGLLDCAGQVLREEGAQGCFKGLSPSLLKAALSTGLVFFWYELFCNFFHHMRKADS</sequence>
<accession>Q29RM1</accession>
<organism>
    <name type="scientific">Bos taurus</name>
    <name type="common">Bovine</name>
    <dbReference type="NCBI Taxonomy" id="9913"/>
    <lineage>
        <taxon>Eukaryota</taxon>
        <taxon>Metazoa</taxon>
        <taxon>Chordata</taxon>
        <taxon>Craniata</taxon>
        <taxon>Vertebrata</taxon>
        <taxon>Euteleostomi</taxon>
        <taxon>Mammalia</taxon>
        <taxon>Eutheria</taxon>
        <taxon>Laurasiatheria</taxon>
        <taxon>Artiodactyla</taxon>
        <taxon>Ruminantia</taxon>
        <taxon>Pecora</taxon>
        <taxon>Bovidae</taxon>
        <taxon>Bovinae</taxon>
        <taxon>Bos</taxon>
    </lineage>
</organism>